<organism>
    <name type="scientific">Homo sapiens</name>
    <name type="common">Human</name>
    <dbReference type="NCBI Taxonomy" id="9606"/>
    <lineage>
        <taxon>Eukaryota</taxon>
        <taxon>Metazoa</taxon>
        <taxon>Chordata</taxon>
        <taxon>Craniata</taxon>
        <taxon>Vertebrata</taxon>
        <taxon>Euteleostomi</taxon>
        <taxon>Mammalia</taxon>
        <taxon>Eutheria</taxon>
        <taxon>Euarchontoglires</taxon>
        <taxon>Primates</taxon>
        <taxon>Haplorrhini</taxon>
        <taxon>Catarrhini</taxon>
        <taxon>Hominidae</taxon>
        <taxon>Homo</taxon>
    </lineage>
</organism>
<accession>A0A1B0GWB2</accession>
<feature type="chain" id="PRO_0000443109" description="Proline rich transmembrane protein 1B">
    <location>
        <begin position="1"/>
        <end position="263"/>
    </location>
</feature>
<feature type="transmembrane region" description="Helical" evidence="1">
    <location>
        <begin position="190"/>
        <end position="210"/>
    </location>
</feature>
<feature type="transmembrane region" description="Helical" evidence="1">
    <location>
        <begin position="238"/>
        <end position="258"/>
    </location>
</feature>
<feature type="region of interest" description="Disordered" evidence="2">
    <location>
        <begin position="1"/>
        <end position="107"/>
    </location>
</feature>
<feature type="compositionally biased region" description="Gly residues" evidence="2">
    <location>
        <begin position="1"/>
        <end position="17"/>
    </location>
</feature>
<feature type="compositionally biased region" description="Low complexity" evidence="2">
    <location>
        <begin position="37"/>
        <end position="47"/>
    </location>
</feature>
<feature type="compositionally biased region" description="Low complexity" evidence="2">
    <location>
        <begin position="75"/>
        <end position="86"/>
    </location>
</feature>
<protein>
    <recommendedName>
        <fullName evidence="3">Proline rich transmembrane protein 1B</fullName>
    </recommendedName>
</protein>
<dbReference type="EMBL" id="AL160276">
    <property type="status" value="NOT_ANNOTATED_CDS"/>
    <property type="molecule type" value="Genomic_DNA"/>
</dbReference>
<dbReference type="CCDS" id="CCDS94520.1"/>
<dbReference type="RefSeq" id="NP_001382572.1">
    <property type="nucleotide sequence ID" value="NM_001395643.1"/>
</dbReference>
<dbReference type="SMR" id="A0A1B0GWB2"/>
<dbReference type="FunCoup" id="A0A1B0GWB2">
    <property type="interactions" value="88"/>
</dbReference>
<dbReference type="STRING" id="9606.ENSP00000490857"/>
<dbReference type="GlyGen" id="A0A1B0GWB2">
    <property type="glycosylation" value="2 sites"/>
</dbReference>
<dbReference type="BioMuta" id="ENSG00000283526"/>
<dbReference type="MassIVE" id="A0A1B0GWB2"/>
<dbReference type="PeptideAtlas" id="A0A1B0GWB2"/>
<dbReference type="Ensembl" id="ENST00000636672.2">
    <property type="protein sequence ID" value="ENSP00000490857.1"/>
    <property type="gene ID" value="ENSG00000283526.2"/>
</dbReference>
<dbReference type="GeneID" id="642515"/>
<dbReference type="MANE-Select" id="ENST00000636672.2">
    <property type="protein sequence ID" value="ENSP00000490857.1"/>
    <property type="RefSeq nucleotide sequence ID" value="NM_001395643.1"/>
    <property type="RefSeq protein sequence ID" value="NP_001382572.1"/>
</dbReference>
<dbReference type="AGR" id="HGNC:53642"/>
<dbReference type="GeneCards" id="PRRT1B"/>
<dbReference type="HGNC" id="HGNC:53642">
    <property type="gene designation" value="PRRT1B"/>
</dbReference>
<dbReference type="HPA" id="ENSG00000283526">
    <property type="expression patterns" value="Tissue enhanced (fallopian tube, lung, pancreas)"/>
</dbReference>
<dbReference type="neXtProt" id="NX_A0A1B0GWB2"/>
<dbReference type="VEuPathDB" id="HostDB:ENSG00000283526"/>
<dbReference type="GeneTree" id="ENSGT00940000163383"/>
<dbReference type="InParanoid" id="A0A1B0GWB2"/>
<dbReference type="OMA" id="GAPHIGF"/>
<dbReference type="OrthoDB" id="6083617at2759"/>
<dbReference type="PAN-GO" id="A0A1B0GWB2">
    <property type="GO annotations" value="1 GO annotation based on evolutionary models"/>
</dbReference>
<dbReference type="Pharos" id="A0A1B0GWB2">
    <property type="development level" value="Tdark"/>
</dbReference>
<dbReference type="PRO" id="PR:A0A1B0GWB2"/>
<dbReference type="Proteomes" id="UP000005640">
    <property type="component" value="Chromosome 9"/>
</dbReference>
<dbReference type="RNAct" id="A0A1B0GWB2">
    <property type="molecule type" value="protein"/>
</dbReference>
<dbReference type="Bgee" id="ENSG00000283526">
    <property type="expression patterns" value="Expressed in right uterine tube and 34 other cell types or tissues"/>
</dbReference>
<dbReference type="GO" id="GO:0016020">
    <property type="term" value="C:membrane"/>
    <property type="evidence" value="ECO:0000318"/>
    <property type="project" value="GO_Central"/>
</dbReference>
<dbReference type="InterPro" id="IPR051423">
    <property type="entry name" value="CD225/Dispanin"/>
</dbReference>
<dbReference type="InterPro" id="IPR007593">
    <property type="entry name" value="CD225/Dispanin_fam"/>
</dbReference>
<dbReference type="PANTHER" id="PTHR14948">
    <property type="entry name" value="NG5"/>
    <property type="match status" value="1"/>
</dbReference>
<dbReference type="PANTHER" id="PTHR14948:SF18">
    <property type="entry name" value="PROLINE RICH TRANSMEMBRANE PROTEIN 1B"/>
    <property type="match status" value="1"/>
</dbReference>
<dbReference type="Pfam" id="PF04505">
    <property type="entry name" value="CD225"/>
    <property type="match status" value="1"/>
</dbReference>
<evidence type="ECO:0000255" key="1"/>
<evidence type="ECO:0000256" key="2">
    <source>
        <dbReference type="SAM" id="MobiDB-lite"/>
    </source>
</evidence>
<evidence type="ECO:0000305" key="3"/>
<evidence type="ECO:0000312" key="4">
    <source>
        <dbReference type="HGNC" id="HGNC:53642"/>
    </source>
</evidence>
<gene>
    <name evidence="4" type="primary">PRRT1B</name>
    <name evidence="4" type="synonym">IFITMD8</name>
</gene>
<name>PRT1B_HUMAN</name>
<reference key="1">
    <citation type="journal article" date="2004" name="Nature">
        <title>DNA sequence and analysis of human chromosome 9.</title>
        <authorList>
            <person name="Humphray S.J."/>
            <person name="Oliver K."/>
            <person name="Hunt A.R."/>
            <person name="Plumb R.W."/>
            <person name="Loveland J.E."/>
            <person name="Howe K.L."/>
            <person name="Andrews T.D."/>
            <person name="Searle S."/>
            <person name="Hunt S.E."/>
            <person name="Scott C.E."/>
            <person name="Jones M.C."/>
            <person name="Ainscough R."/>
            <person name="Almeida J.P."/>
            <person name="Ambrose K.D."/>
            <person name="Ashwell R.I.S."/>
            <person name="Babbage A.K."/>
            <person name="Babbage S."/>
            <person name="Bagguley C.L."/>
            <person name="Bailey J."/>
            <person name="Banerjee R."/>
            <person name="Barker D.J."/>
            <person name="Barlow K.F."/>
            <person name="Bates K."/>
            <person name="Beasley H."/>
            <person name="Beasley O."/>
            <person name="Bird C.P."/>
            <person name="Bray-Allen S."/>
            <person name="Brown A.J."/>
            <person name="Brown J.Y."/>
            <person name="Burford D."/>
            <person name="Burrill W."/>
            <person name="Burton J."/>
            <person name="Carder C."/>
            <person name="Carter N.P."/>
            <person name="Chapman J.C."/>
            <person name="Chen Y."/>
            <person name="Clarke G."/>
            <person name="Clark S.Y."/>
            <person name="Clee C.M."/>
            <person name="Clegg S."/>
            <person name="Collier R.E."/>
            <person name="Corby N."/>
            <person name="Crosier M."/>
            <person name="Cummings A.T."/>
            <person name="Davies J."/>
            <person name="Dhami P."/>
            <person name="Dunn M."/>
            <person name="Dutta I."/>
            <person name="Dyer L.W."/>
            <person name="Earthrowl M.E."/>
            <person name="Faulkner L."/>
            <person name="Fleming C.J."/>
            <person name="Frankish A."/>
            <person name="Frankland J.A."/>
            <person name="French L."/>
            <person name="Fricker D.G."/>
            <person name="Garner P."/>
            <person name="Garnett J."/>
            <person name="Ghori J."/>
            <person name="Gilbert J.G.R."/>
            <person name="Glison C."/>
            <person name="Grafham D.V."/>
            <person name="Gribble S."/>
            <person name="Griffiths C."/>
            <person name="Griffiths-Jones S."/>
            <person name="Grocock R."/>
            <person name="Guy J."/>
            <person name="Hall R.E."/>
            <person name="Hammond S."/>
            <person name="Harley J.L."/>
            <person name="Harrison E.S.I."/>
            <person name="Hart E.A."/>
            <person name="Heath P.D."/>
            <person name="Henderson C.D."/>
            <person name="Hopkins B.L."/>
            <person name="Howard P.J."/>
            <person name="Howden P.J."/>
            <person name="Huckle E."/>
            <person name="Johnson C."/>
            <person name="Johnson D."/>
            <person name="Joy A.A."/>
            <person name="Kay M."/>
            <person name="Keenan S."/>
            <person name="Kershaw J.K."/>
            <person name="Kimberley A.M."/>
            <person name="King A."/>
            <person name="Knights A."/>
            <person name="Laird G.K."/>
            <person name="Langford C."/>
            <person name="Lawlor S."/>
            <person name="Leongamornlert D.A."/>
            <person name="Leversha M."/>
            <person name="Lloyd C."/>
            <person name="Lloyd D.M."/>
            <person name="Lovell J."/>
            <person name="Martin S."/>
            <person name="Mashreghi-Mohammadi M."/>
            <person name="Matthews L."/>
            <person name="McLaren S."/>
            <person name="McLay K.E."/>
            <person name="McMurray A."/>
            <person name="Milne S."/>
            <person name="Nickerson T."/>
            <person name="Nisbett J."/>
            <person name="Nordsiek G."/>
            <person name="Pearce A.V."/>
            <person name="Peck A.I."/>
            <person name="Porter K.M."/>
            <person name="Pandian R."/>
            <person name="Pelan S."/>
            <person name="Phillimore B."/>
            <person name="Povey S."/>
            <person name="Ramsey Y."/>
            <person name="Rand V."/>
            <person name="Scharfe M."/>
            <person name="Sehra H.K."/>
            <person name="Shownkeen R."/>
            <person name="Sims S.K."/>
            <person name="Skuce C.D."/>
            <person name="Smith M."/>
            <person name="Steward C.A."/>
            <person name="Swarbreck D."/>
            <person name="Sycamore N."/>
            <person name="Tester J."/>
            <person name="Thorpe A."/>
            <person name="Tracey A."/>
            <person name="Tromans A."/>
            <person name="Thomas D.W."/>
            <person name="Wall M."/>
            <person name="Wallis J.M."/>
            <person name="West A.P."/>
            <person name="Whitehead S.L."/>
            <person name="Willey D.L."/>
            <person name="Williams S.A."/>
            <person name="Wilming L."/>
            <person name="Wray P.W."/>
            <person name="Young L."/>
            <person name="Ashurst J.L."/>
            <person name="Coulson A."/>
            <person name="Blocker H."/>
            <person name="Durbin R.M."/>
            <person name="Sulston J.E."/>
            <person name="Hubbard T."/>
            <person name="Jackson M.J."/>
            <person name="Bentley D.R."/>
            <person name="Beck S."/>
            <person name="Rogers J."/>
            <person name="Dunham I."/>
        </authorList>
    </citation>
    <scope>NUCLEOTIDE SEQUENCE [LARGE SCALE GENOMIC DNA]</scope>
</reference>
<sequence>MEAGAGGAGSDTKGGGSPATPEDPRSPAKPAAPEDPQMPAQPALPQLPRRPRTLDEDGAPSEDGAAGGSEPAPEDAPAQAAGEAGPVSKAAAGGAPHIGFVGEPPPYAPPDPKAAPLLYPPFPQVPVVLQPAPSALFPPPAQLYPAAPTPPALFSPPAGAAFPFPVYNGPMAGVPGPATVEHRPLPKDYMMESVLVTLFCCLLTGLIAIVYSHEARAALGRGDLAQAEEASRKARSLVLFSLLFGVFVSTSWVIYVVVALYLP</sequence>
<keyword id="KW-0472">Membrane</keyword>
<keyword id="KW-1267">Proteomics identification</keyword>
<keyword id="KW-1185">Reference proteome</keyword>
<keyword id="KW-0812">Transmembrane</keyword>
<keyword id="KW-1133">Transmembrane helix</keyword>
<comment type="subcellular location">
    <subcellularLocation>
        <location evidence="1">Membrane</location>
        <topology evidence="1">Multi-pass membrane protein</topology>
    </subcellularLocation>
</comment>
<comment type="similarity">
    <text evidence="3">Belongs to the CD225/Dispanin family.</text>
</comment>
<proteinExistence type="evidence at protein level"/>